<gene>
    <name evidence="1" type="primary">rpsF</name>
    <name type="ordered locus">Z5809</name>
    <name type="ordered locus">ECs5176</name>
</gene>
<feature type="chain" id="PRO_0000176765" description="Small ribosomal subunit protein bS6">
    <location>
        <begin position="1"/>
        <end position="131"/>
    </location>
</feature>
<feature type="region of interest" description="Disordered" evidence="2">
    <location>
        <begin position="98"/>
        <end position="131"/>
    </location>
</feature>
<feature type="compositionally biased region" description="Basic and acidic residues" evidence="2">
    <location>
        <begin position="104"/>
        <end position="116"/>
    </location>
</feature>
<feature type="compositionally biased region" description="Acidic residues" evidence="2">
    <location>
        <begin position="120"/>
        <end position="131"/>
    </location>
</feature>
<feature type="modified residue" description="N6-acetyllysine" evidence="1">
    <location>
        <position position="93"/>
    </location>
</feature>
<keyword id="KW-0007">Acetylation</keyword>
<keyword id="KW-1185">Reference proteome</keyword>
<keyword id="KW-0687">Ribonucleoprotein</keyword>
<keyword id="KW-0689">Ribosomal protein</keyword>
<keyword id="KW-0694">RNA-binding</keyword>
<keyword id="KW-0699">rRNA-binding</keyword>
<dbReference type="EMBL" id="AE005174">
    <property type="protein sequence ID" value="AAG59396.1"/>
    <property type="molecule type" value="Genomic_DNA"/>
</dbReference>
<dbReference type="EMBL" id="BA000007">
    <property type="protein sequence ID" value="BAB38599.1"/>
    <property type="molecule type" value="Genomic_DNA"/>
</dbReference>
<dbReference type="PIR" id="H86116">
    <property type="entry name" value="H86116"/>
</dbReference>
<dbReference type="PIR" id="H91275">
    <property type="entry name" value="H91275"/>
</dbReference>
<dbReference type="RefSeq" id="NP_313203.1">
    <property type="nucleotide sequence ID" value="NC_002695.1"/>
</dbReference>
<dbReference type="RefSeq" id="WP_001216676.1">
    <property type="nucleotide sequence ID" value="NZ_VOAI01000008.1"/>
</dbReference>
<dbReference type="SMR" id="P0A4D1"/>
<dbReference type="STRING" id="155864.Z5809"/>
<dbReference type="GeneID" id="913987"/>
<dbReference type="GeneID" id="93777623"/>
<dbReference type="KEGG" id="ece:Z5809"/>
<dbReference type="KEGG" id="ecs:ECs_5176"/>
<dbReference type="PATRIC" id="fig|386585.9.peg.5410"/>
<dbReference type="eggNOG" id="COG0360">
    <property type="taxonomic scope" value="Bacteria"/>
</dbReference>
<dbReference type="HOGENOM" id="CLU_113441_6_1_6"/>
<dbReference type="OMA" id="AYPIQHK"/>
<dbReference type="Proteomes" id="UP000000558">
    <property type="component" value="Chromosome"/>
</dbReference>
<dbReference type="Proteomes" id="UP000002519">
    <property type="component" value="Chromosome"/>
</dbReference>
<dbReference type="GO" id="GO:0022627">
    <property type="term" value="C:cytosolic small ribosomal subunit"/>
    <property type="evidence" value="ECO:0007669"/>
    <property type="project" value="TreeGrafter"/>
</dbReference>
<dbReference type="GO" id="GO:0070181">
    <property type="term" value="F:small ribosomal subunit rRNA binding"/>
    <property type="evidence" value="ECO:0007669"/>
    <property type="project" value="TreeGrafter"/>
</dbReference>
<dbReference type="GO" id="GO:0003735">
    <property type="term" value="F:structural constituent of ribosome"/>
    <property type="evidence" value="ECO:0007669"/>
    <property type="project" value="InterPro"/>
</dbReference>
<dbReference type="GO" id="GO:0006412">
    <property type="term" value="P:translation"/>
    <property type="evidence" value="ECO:0007669"/>
    <property type="project" value="UniProtKB-UniRule"/>
</dbReference>
<dbReference type="CDD" id="cd00473">
    <property type="entry name" value="bS6"/>
    <property type="match status" value="1"/>
</dbReference>
<dbReference type="FunFam" id="3.30.70.60:FF:000003">
    <property type="entry name" value="30S ribosomal protein S6"/>
    <property type="match status" value="1"/>
</dbReference>
<dbReference type="Gene3D" id="3.30.70.60">
    <property type="match status" value="1"/>
</dbReference>
<dbReference type="HAMAP" id="MF_00360">
    <property type="entry name" value="Ribosomal_bS6"/>
    <property type="match status" value="1"/>
</dbReference>
<dbReference type="InterPro" id="IPR000529">
    <property type="entry name" value="Ribosomal_bS6"/>
</dbReference>
<dbReference type="InterPro" id="IPR020815">
    <property type="entry name" value="Ribosomal_bS6_CS"/>
</dbReference>
<dbReference type="InterPro" id="IPR035980">
    <property type="entry name" value="Ribosomal_bS6_sf"/>
</dbReference>
<dbReference type="InterPro" id="IPR020814">
    <property type="entry name" value="Ribosomal_S6_plastid/chlpt"/>
</dbReference>
<dbReference type="InterPro" id="IPR014717">
    <property type="entry name" value="Transl_elong_EF1B/ribsomal_bS6"/>
</dbReference>
<dbReference type="NCBIfam" id="TIGR00166">
    <property type="entry name" value="S6"/>
    <property type="match status" value="1"/>
</dbReference>
<dbReference type="PANTHER" id="PTHR21011">
    <property type="entry name" value="MITOCHONDRIAL 28S RIBOSOMAL PROTEIN S6"/>
    <property type="match status" value="1"/>
</dbReference>
<dbReference type="PANTHER" id="PTHR21011:SF1">
    <property type="entry name" value="SMALL RIBOSOMAL SUBUNIT PROTEIN BS6M"/>
    <property type="match status" value="1"/>
</dbReference>
<dbReference type="Pfam" id="PF01250">
    <property type="entry name" value="Ribosomal_S6"/>
    <property type="match status" value="1"/>
</dbReference>
<dbReference type="SUPFAM" id="SSF54995">
    <property type="entry name" value="Ribosomal protein S6"/>
    <property type="match status" value="1"/>
</dbReference>
<dbReference type="PROSITE" id="PS01048">
    <property type="entry name" value="RIBOSOMAL_S6"/>
    <property type="match status" value="1"/>
</dbReference>
<sequence length="131" mass="15187">MRHYEIVFMVHPDQSEQVPGMIERYTAAITGAEGKIHRLEDWGRRQLAYPINKLHKAHYVLMNVEAPQEVIDELETTFRFNDAVIRSMVMRTKHAVTEASPMVKAKDERRERRDDFANETADDAEAGDSEE</sequence>
<evidence type="ECO:0000255" key="1">
    <source>
        <dbReference type="HAMAP-Rule" id="MF_00360"/>
    </source>
</evidence>
<evidence type="ECO:0000256" key="2">
    <source>
        <dbReference type="SAM" id="MobiDB-lite"/>
    </source>
</evidence>
<evidence type="ECO:0000305" key="3"/>
<protein>
    <recommendedName>
        <fullName evidence="1">Small ribosomal subunit protein bS6</fullName>
    </recommendedName>
    <alternativeName>
        <fullName evidence="3">30S ribosomal protein S6</fullName>
    </alternativeName>
</protein>
<accession>P0A4D1</accession>
<accession>Q8XDI1</accession>
<reference key="1">
    <citation type="journal article" date="2001" name="Nature">
        <title>Genome sequence of enterohaemorrhagic Escherichia coli O157:H7.</title>
        <authorList>
            <person name="Perna N.T."/>
            <person name="Plunkett G. III"/>
            <person name="Burland V."/>
            <person name="Mau B."/>
            <person name="Glasner J.D."/>
            <person name="Rose D.J."/>
            <person name="Mayhew G.F."/>
            <person name="Evans P.S."/>
            <person name="Gregor J."/>
            <person name="Kirkpatrick H.A."/>
            <person name="Posfai G."/>
            <person name="Hackett J."/>
            <person name="Klink S."/>
            <person name="Boutin A."/>
            <person name="Shao Y."/>
            <person name="Miller L."/>
            <person name="Grotbeck E.J."/>
            <person name="Davis N.W."/>
            <person name="Lim A."/>
            <person name="Dimalanta E.T."/>
            <person name="Potamousis K."/>
            <person name="Apodaca J."/>
            <person name="Anantharaman T.S."/>
            <person name="Lin J."/>
            <person name="Yen G."/>
            <person name="Schwartz D.C."/>
            <person name="Welch R.A."/>
            <person name="Blattner F.R."/>
        </authorList>
    </citation>
    <scope>NUCLEOTIDE SEQUENCE [LARGE SCALE GENOMIC DNA]</scope>
    <source>
        <strain>O157:H7 / EDL933 / ATCC 700927 / EHEC</strain>
    </source>
</reference>
<reference key="2">
    <citation type="journal article" date="2001" name="DNA Res.">
        <title>Complete genome sequence of enterohemorrhagic Escherichia coli O157:H7 and genomic comparison with a laboratory strain K-12.</title>
        <authorList>
            <person name="Hayashi T."/>
            <person name="Makino K."/>
            <person name="Ohnishi M."/>
            <person name="Kurokawa K."/>
            <person name="Ishii K."/>
            <person name="Yokoyama K."/>
            <person name="Han C.-G."/>
            <person name="Ohtsubo E."/>
            <person name="Nakayama K."/>
            <person name="Murata T."/>
            <person name="Tanaka M."/>
            <person name="Tobe T."/>
            <person name="Iida T."/>
            <person name="Takami H."/>
            <person name="Honda T."/>
            <person name="Sasakawa C."/>
            <person name="Ogasawara N."/>
            <person name="Yasunaga T."/>
            <person name="Kuhara S."/>
            <person name="Shiba T."/>
            <person name="Hattori M."/>
            <person name="Shinagawa H."/>
        </authorList>
    </citation>
    <scope>NUCLEOTIDE SEQUENCE [LARGE SCALE GENOMIC DNA]</scope>
    <source>
        <strain>O157:H7 / Sakai / RIMD 0509952 / EHEC</strain>
    </source>
</reference>
<name>RS6_ECO57</name>
<comment type="function">
    <text evidence="1">Binds together with bS18 to 16S ribosomal RNA.</text>
</comment>
<comment type="similarity">
    <text evidence="1">Belongs to the bacterial ribosomal protein bS6 family.</text>
</comment>
<organism>
    <name type="scientific">Escherichia coli O157:H7</name>
    <dbReference type="NCBI Taxonomy" id="83334"/>
    <lineage>
        <taxon>Bacteria</taxon>
        <taxon>Pseudomonadati</taxon>
        <taxon>Pseudomonadota</taxon>
        <taxon>Gammaproteobacteria</taxon>
        <taxon>Enterobacterales</taxon>
        <taxon>Enterobacteriaceae</taxon>
        <taxon>Escherichia</taxon>
    </lineage>
</organism>
<proteinExistence type="inferred from homology"/>